<comment type="function">
    <text evidence="1">Catalyzes the initial step of the lipid cycle reactions in the biosynthesis of the cell wall peptidoglycan: transfers peptidoglycan precursor phospho-MurNAc-pentapeptide from UDP-MurNAc-pentapeptide onto the lipid carrier undecaprenyl phosphate, yielding undecaprenyl-pyrophosphoryl-MurNAc-pentapeptide, known as lipid I.</text>
</comment>
<comment type="catalytic activity">
    <reaction evidence="1">
        <text>UDP-N-acetyl-alpha-D-muramoyl-L-alanyl-gamma-D-glutamyl-meso-2,6-diaminopimeloyl-D-alanyl-D-alanine + di-trans,octa-cis-undecaprenyl phosphate = di-trans,octa-cis-undecaprenyl diphospho-N-acetyl-alpha-D-muramoyl-L-alanyl-D-glutamyl-meso-2,6-diaminopimeloyl-D-alanyl-D-alanine + UMP</text>
        <dbReference type="Rhea" id="RHEA:28386"/>
        <dbReference type="ChEBI" id="CHEBI:57865"/>
        <dbReference type="ChEBI" id="CHEBI:60392"/>
        <dbReference type="ChEBI" id="CHEBI:61386"/>
        <dbReference type="ChEBI" id="CHEBI:61387"/>
        <dbReference type="EC" id="2.7.8.13"/>
    </reaction>
</comment>
<comment type="cofactor">
    <cofactor evidence="1">
        <name>Mg(2+)</name>
        <dbReference type="ChEBI" id="CHEBI:18420"/>
    </cofactor>
</comment>
<comment type="pathway">
    <text evidence="1">Cell wall biogenesis; peptidoglycan biosynthesis.</text>
</comment>
<comment type="subcellular location">
    <subcellularLocation>
        <location evidence="1">Cell membrane</location>
        <topology evidence="1">Multi-pass membrane protein</topology>
    </subcellularLocation>
</comment>
<comment type="similarity">
    <text evidence="1">Belongs to the glycosyltransferase 4 family. MraY subfamily.</text>
</comment>
<gene>
    <name evidence="1" type="primary">mraY</name>
    <name type="ordered locus">Teth39_0810</name>
</gene>
<protein>
    <recommendedName>
        <fullName evidence="1">Phospho-N-acetylmuramoyl-pentapeptide-transferase</fullName>
        <ecNumber evidence="1">2.7.8.13</ecNumber>
    </recommendedName>
    <alternativeName>
        <fullName evidence="1">UDP-MurNAc-pentapeptide phosphotransferase</fullName>
    </alternativeName>
</protein>
<reference key="1">
    <citation type="submission" date="2008-01" db="EMBL/GenBank/DDBJ databases">
        <title>Complete sequence of Thermoanaerobacter pseudethanolicus 39E.</title>
        <authorList>
            <person name="Copeland A."/>
            <person name="Lucas S."/>
            <person name="Lapidus A."/>
            <person name="Barry K."/>
            <person name="Glavina del Rio T."/>
            <person name="Dalin E."/>
            <person name="Tice H."/>
            <person name="Pitluck S."/>
            <person name="Bruce D."/>
            <person name="Goodwin L."/>
            <person name="Saunders E."/>
            <person name="Brettin T."/>
            <person name="Detter J.C."/>
            <person name="Han C."/>
            <person name="Schmutz J."/>
            <person name="Larimer F."/>
            <person name="Land M."/>
            <person name="Hauser L."/>
            <person name="Kyrpides N."/>
            <person name="Lykidis A."/>
            <person name="Hemme C."/>
            <person name="Fields M.W."/>
            <person name="He Z."/>
            <person name="Zhou J."/>
            <person name="Richardson P."/>
        </authorList>
    </citation>
    <scope>NUCLEOTIDE SEQUENCE [LARGE SCALE GENOMIC DNA]</scope>
    <source>
        <strain>ATCC 33223 / DSM 2355 / 39E</strain>
    </source>
</reference>
<keyword id="KW-0131">Cell cycle</keyword>
<keyword id="KW-0132">Cell division</keyword>
<keyword id="KW-1003">Cell membrane</keyword>
<keyword id="KW-0133">Cell shape</keyword>
<keyword id="KW-0961">Cell wall biogenesis/degradation</keyword>
<keyword id="KW-0460">Magnesium</keyword>
<keyword id="KW-0472">Membrane</keyword>
<keyword id="KW-0479">Metal-binding</keyword>
<keyword id="KW-0573">Peptidoglycan synthesis</keyword>
<keyword id="KW-1185">Reference proteome</keyword>
<keyword id="KW-0808">Transferase</keyword>
<keyword id="KW-0812">Transmembrane</keyword>
<keyword id="KW-1133">Transmembrane helix</keyword>
<dbReference type="EC" id="2.7.8.13" evidence="1"/>
<dbReference type="EMBL" id="CP000924">
    <property type="protein sequence ID" value="ABY94467.1"/>
    <property type="molecule type" value="Genomic_DNA"/>
</dbReference>
<dbReference type="RefSeq" id="WP_009052548.1">
    <property type="nucleotide sequence ID" value="NC_010321.1"/>
</dbReference>
<dbReference type="SMR" id="B0K8K4"/>
<dbReference type="STRING" id="340099.Teth39_0810"/>
<dbReference type="KEGG" id="tpd:Teth39_0810"/>
<dbReference type="eggNOG" id="COG0472">
    <property type="taxonomic scope" value="Bacteria"/>
</dbReference>
<dbReference type="HOGENOM" id="CLU_023982_0_1_9"/>
<dbReference type="UniPathway" id="UPA00219"/>
<dbReference type="Proteomes" id="UP000002156">
    <property type="component" value="Chromosome"/>
</dbReference>
<dbReference type="GO" id="GO:0005886">
    <property type="term" value="C:plasma membrane"/>
    <property type="evidence" value="ECO:0007669"/>
    <property type="project" value="UniProtKB-SubCell"/>
</dbReference>
<dbReference type="GO" id="GO:0046872">
    <property type="term" value="F:metal ion binding"/>
    <property type="evidence" value="ECO:0007669"/>
    <property type="project" value="UniProtKB-KW"/>
</dbReference>
<dbReference type="GO" id="GO:0008963">
    <property type="term" value="F:phospho-N-acetylmuramoyl-pentapeptide-transferase activity"/>
    <property type="evidence" value="ECO:0007669"/>
    <property type="project" value="UniProtKB-UniRule"/>
</dbReference>
<dbReference type="GO" id="GO:0051992">
    <property type="term" value="F:UDP-N-acetylmuramoyl-L-alanyl-D-glutamyl-meso-2,6-diaminopimelyl-D-alanyl-D-alanine:undecaprenyl-phosphate transferase activity"/>
    <property type="evidence" value="ECO:0007669"/>
    <property type="project" value="RHEA"/>
</dbReference>
<dbReference type="GO" id="GO:0051301">
    <property type="term" value="P:cell division"/>
    <property type="evidence" value="ECO:0007669"/>
    <property type="project" value="UniProtKB-KW"/>
</dbReference>
<dbReference type="GO" id="GO:0071555">
    <property type="term" value="P:cell wall organization"/>
    <property type="evidence" value="ECO:0007669"/>
    <property type="project" value="UniProtKB-KW"/>
</dbReference>
<dbReference type="GO" id="GO:0009252">
    <property type="term" value="P:peptidoglycan biosynthetic process"/>
    <property type="evidence" value="ECO:0007669"/>
    <property type="project" value="UniProtKB-UniRule"/>
</dbReference>
<dbReference type="GO" id="GO:0008360">
    <property type="term" value="P:regulation of cell shape"/>
    <property type="evidence" value="ECO:0007669"/>
    <property type="project" value="UniProtKB-KW"/>
</dbReference>
<dbReference type="CDD" id="cd06852">
    <property type="entry name" value="GT_MraY"/>
    <property type="match status" value="1"/>
</dbReference>
<dbReference type="HAMAP" id="MF_00038">
    <property type="entry name" value="MraY"/>
    <property type="match status" value="1"/>
</dbReference>
<dbReference type="InterPro" id="IPR000715">
    <property type="entry name" value="Glycosyl_transferase_4"/>
</dbReference>
<dbReference type="InterPro" id="IPR003524">
    <property type="entry name" value="PNAcMuramoyl-5peptid_Trfase"/>
</dbReference>
<dbReference type="InterPro" id="IPR018480">
    <property type="entry name" value="PNAcMuramoyl-5peptid_Trfase_CS"/>
</dbReference>
<dbReference type="NCBIfam" id="TIGR00445">
    <property type="entry name" value="mraY"/>
    <property type="match status" value="1"/>
</dbReference>
<dbReference type="PANTHER" id="PTHR22926">
    <property type="entry name" value="PHOSPHO-N-ACETYLMURAMOYL-PENTAPEPTIDE-TRANSFERASE"/>
    <property type="match status" value="1"/>
</dbReference>
<dbReference type="PANTHER" id="PTHR22926:SF5">
    <property type="entry name" value="PHOSPHO-N-ACETYLMURAMOYL-PENTAPEPTIDE-TRANSFERASE HOMOLOG"/>
    <property type="match status" value="1"/>
</dbReference>
<dbReference type="Pfam" id="PF00953">
    <property type="entry name" value="Glycos_transf_4"/>
    <property type="match status" value="1"/>
</dbReference>
<dbReference type="Pfam" id="PF10555">
    <property type="entry name" value="MraY_sig1"/>
    <property type="match status" value="1"/>
</dbReference>
<dbReference type="PROSITE" id="PS01347">
    <property type="entry name" value="MRAY_1"/>
    <property type="match status" value="1"/>
</dbReference>
<dbReference type="PROSITE" id="PS01348">
    <property type="entry name" value="MRAY_2"/>
    <property type="match status" value="1"/>
</dbReference>
<name>MRAY_THEP3</name>
<sequence>MLQKIILATVVAFVLSLASGPLFIPYLRKLKFGQKVREDGPKSHIKKSGTPTMGGIMFITATVISTLIFSHWNKYLAILLLGFLGYGLIGFADDFLKVYFKRPLGLKAREKLIGQFLLAIIISYFAQEYVGTEVIFPFLKTTIDLGNFYIPFIVFVIVGTVNSVNLTDGLDGLAAGVSFIVMAFFTMTALFLNNITYGAFSAALTGGLLGFLRYNRHPAEIFMGDTGSLAIGGAIATAAVLTKLPLILPLIGIIYVAEAFSVIIQVLSFKLFGKRVFKMSPLHHHFELSGWQEQNVVYAFWIVTLIAMFLSFYSLS</sequence>
<feature type="chain" id="PRO_1000090680" description="Phospho-N-acetylmuramoyl-pentapeptide-transferase">
    <location>
        <begin position="1"/>
        <end position="316"/>
    </location>
</feature>
<feature type="transmembrane region" description="Helical" evidence="1">
    <location>
        <begin position="5"/>
        <end position="25"/>
    </location>
</feature>
<feature type="transmembrane region" description="Helical" evidence="1">
    <location>
        <begin position="49"/>
        <end position="69"/>
    </location>
</feature>
<feature type="transmembrane region" description="Helical" evidence="1">
    <location>
        <begin position="76"/>
        <end position="96"/>
    </location>
</feature>
<feature type="transmembrane region" description="Helical" evidence="1">
    <location>
        <begin position="116"/>
        <end position="136"/>
    </location>
</feature>
<feature type="transmembrane region" description="Helical" evidence="1">
    <location>
        <begin position="141"/>
        <end position="161"/>
    </location>
</feature>
<feature type="transmembrane region" description="Helical" evidence="1">
    <location>
        <begin position="172"/>
        <end position="192"/>
    </location>
</feature>
<feature type="transmembrane region" description="Helical" evidence="1">
    <location>
        <begin position="195"/>
        <end position="212"/>
    </location>
</feature>
<feature type="transmembrane region" description="Helical" evidence="1">
    <location>
        <begin position="221"/>
        <end position="241"/>
    </location>
</feature>
<feature type="transmembrane region" description="Helical" evidence="1">
    <location>
        <begin position="244"/>
        <end position="264"/>
    </location>
</feature>
<feature type="transmembrane region" description="Helical" evidence="1">
    <location>
        <begin position="296"/>
        <end position="316"/>
    </location>
</feature>
<accession>B0K8K4</accession>
<evidence type="ECO:0000255" key="1">
    <source>
        <dbReference type="HAMAP-Rule" id="MF_00038"/>
    </source>
</evidence>
<proteinExistence type="inferred from homology"/>
<organism>
    <name type="scientific">Thermoanaerobacter pseudethanolicus (strain ATCC 33223 / 39E)</name>
    <name type="common">Clostridium thermohydrosulfuricum</name>
    <dbReference type="NCBI Taxonomy" id="340099"/>
    <lineage>
        <taxon>Bacteria</taxon>
        <taxon>Bacillati</taxon>
        <taxon>Bacillota</taxon>
        <taxon>Clostridia</taxon>
        <taxon>Thermoanaerobacterales</taxon>
        <taxon>Thermoanaerobacteraceae</taxon>
        <taxon>Thermoanaerobacter</taxon>
    </lineage>
</organism>